<organism>
    <name type="scientific">Prochlorococcus marinus (strain MIT 9313)</name>
    <dbReference type="NCBI Taxonomy" id="74547"/>
    <lineage>
        <taxon>Bacteria</taxon>
        <taxon>Bacillati</taxon>
        <taxon>Cyanobacteriota</taxon>
        <taxon>Cyanophyceae</taxon>
        <taxon>Synechococcales</taxon>
        <taxon>Prochlorococcaceae</taxon>
        <taxon>Prochlorococcus</taxon>
    </lineage>
</organism>
<reference key="1">
    <citation type="journal article" date="2003" name="Nature">
        <title>Genome divergence in two Prochlorococcus ecotypes reflects oceanic niche differentiation.</title>
        <authorList>
            <person name="Rocap G."/>
            <person name="Larimer F.W."/>
            <person name="Lamerdin J.E."/>
            <person name="Malfatti S."/>
            <person name="Chain P."/>
            <person name="Ahlgren N.A."/>
            <person name="Arellano A."/>
            <person name="Coleman M."/>
            <person name="Hauser L."/>
            <person name="Hess W.R."/>
            <person name="Johnson Z.I."/>
            <person name="Land M.L."/>
            <person name="Lindell D."/>
            <person name="Post A.F."/>
            <person name="Regala W."/>
            <person name="Shah M."/>
            <person name="Shaw S.L."/>
            <person name="Steglich C."/>
            <person name="Sullivan M.B."/>
            <person name="Ting C.S."/>
            <person name="Tolonen A."/>
            <person name="Webb E.A."/>
            <person name="Zinser E.R."/>
            <person name="Chisholm S.W."/>
        </authorList>
    </citation>
    <scope>NUCLEOTIDE SEQUENCE [LARGE SCALE GENOMIC DNA]</scope>
    <source>
        <strain>MIT 9313</strain>
    </source>
</reference>
<comment type="function">
    <text evidence="1">Located on the platform of the 30S subunit, it bridges several disparate RNA helices of the 16S rRNA. Forms part of the Shine-Dalgarno cleft in the 70S ribosome.</text>
</comment>
<comment type="subunit">
    <text evidence="1">Part of the 30S ribosomal subunit. Interacts with proteins S7 and S18. Binds to IF-3.</text>
</comment>
<comment type="similarity">
    <text evidence="1">Belongs to the universal ribosomal protein uS11 family.</text>
</comment>
<sequence length="130" mass="13812">MAKPTKKTGSKKTKRNVPNGVAHIQSTFNNTIVSIADTAGEVIAWSSAGASGFKGARKGTPFAAQTAAEAAARRALEQGMRQIEVLVRGPGSGRETAIRALQVAGLEITLIRDVTPLPHNGCRRPKRRRV</sequence>
<name>RS11_PROMM</name>
<protein>
    <recommendedName>
        <fullName evidence="1">Small ribosomal subunit protein uS11</fullName>
    </recommendedName>
    <alternativeName>
        <fullName evidence="2">30S ribosomal protein S11</fullName>
    </alternativeName>
</protein>
<proteinExistence type="inferred from homology"/>
<dbReference type="EMBL" id="BX548175">
    <property type="protein sequence ID" value="CAE21929.1"/>
    <property type="molecule type" value="Genomic_DNA"/>
</dbReference>
<dbReference type="RefSeq" id="WP_011131121.1">
    <property type="nucleotide sequence ID" value="NC_005071.1"/>
</dbReference>
<dbReference type="SMR" id="Q7V524"/>
<dbReference type="KEGG" id="pmt:PMT_1754"/>
<dbReference type="eggNOG" id="COG0100">
    <property type="taxonomic scope" value="Bacteria"/>
</dbReference>
<dbReference type="HOGENOM" id="CLU_072439_5_0_3"/>
<dbReference type="OrthoDB" id="9806415at2"/>
<dbReference type="Proteomes" id="UP000001423">
    <property type="component" value="Chromosome"/>
</dbReference>
<dbReference type="GO" id="GO:1990904">
    <property type="term" value="C:ribonucleoprotein complex"/>
    <property type="evidence" value="ECO:0007669"/>
    <property type="project" value="UniProtKB-KW"/>
</dbReference>
<dbReference type="GO" id="GO:0005840">
    <property type="term" value="C:ribosome"/>
    <property type="evidence" value="ECO:0007669"/>
    <property type="project" value="UniProtKB-KW"/>
</dbReference>
<dbReference type="GO" id="GO:0019843">
    <property type="term" value="F:rRNA binding"/>
    <property type="evidence" value="ECO:0007669"/>
    <property type="project" value="UniProtKB-UniRule"/>
</dbReference>
<dbReference type="GO" id="GO:0003735">
    <property type="term" value="F:structural constituent of ribosome"/>
    <property type="evidence" value="ECO:0007669"/>
    <property type="project" value="InterPro"/>
</dbReference>
<dbReference type="GO" id="GO:0006412">
    <property type="term" value="P:translation"/>
    <property type="evidence" value="ECO:0007669"/>
    <property type="project" value="UniProtKB-UniRule"/>
</dbReference>
<dbReference type="FunFam" id="3.30.420.80:FF:000001">
    <property type="entry name" value="30S ribosomal protein S11"/>
    <property type="match status" value="1"/>
</dbReference>
<dbReference type="Gene3D" id="3.30.420.80">
    <property type="entry name" value="Ribosomal protein S11"/>
    <property type="match status" value="1"/>
</dbReference>
<dbReference type="HAMAP" id="MF_01310">
    <property type="entry name" value="Ribosomal_uS11"/>
    <property type="match status" value="1"/>
</dbReference>
<dbReference type="InterPro" id="IPR001971">
    <property type="entry name" value="Ribosomal_uS11"/>
</dbReference>
<dbReference type="InterPro" id="IPR019981">
    <property type="entry name" value="Ribosomal_uS11_bac-type"/>
</dbReference>
<dbReference type="InterPro" id="IPR018102">
    <property type="entry name" value="Ribosomal_uS11_CS"/>
</dbReference>
<dbReference type="InterPro" id="IPR036967">
    <property type="entry name" value="Ribosomal_uS11_sf"/>
</dbReference>
<dbReference type="NCBIfam" id="NF003698">
    <property type="entry name" value="PRK05309.1"/>
    <property type="match status" value="1"/>
</dbReference>
<dbReference type="NCBIfam" id="TIGR03632">
    <property type="entry name" value="uS11_bact"/>
    <property type="match status" value="1"/>
</dbReference>
<dbReference type="PANTHER" id="PTHR11759">
    <property type="entry name" value="40S RIBOSOMAL PROTEIN S14/30S RIBOSOMAL PROTEIN S11"/>
    <property type="match status" value="1"/>
</dbReference>
<dbReference type="Pfam" id="PF00411">
    <property type="entry name" value="Ribosomal_S11"/>
    <property type="match status" value="1"/>
</dbReference>
<dbReference type="PIRSF" id="PIRSF002131">
    <property type="entry name" value="Ribosomal_S11"/>
    <property type="match status" value="1"/>
</dbReference>
<dbReference type="SUPFAM" id="SSF53137">
    <property type="entry name" value="Translational machinery components"/>
    <property type="match status" value="1"/>
</dbReference>
<dbReference type="PROSITE" id="PS00054">
    <property type="entry name" value="RIBOSOMAL_S11"/>
    <property type="match status" value="1"/>
</dbReference>
<accession>Q7V524</accession>
<gene>
    <name evidence="1" type="primary">rpsK</name>
    <name evidence="1" type="synonym">rps11</name>
    <name type="ordered locus">PMT_1754</name>
</gene>
<feature type="chain" id="PRO_0000123199" description="Small ribosomal subunit protein uS11">
    <location>
        <begin position="1"/>
        <end position="130"/>
    </location>
</feature>
<evidence type="ECO:0000255" key="1">
    <source>
        <dbReference type="HAMAP-Rule" id="MF_01310"/>
    </source>
</evidence>
<evidence type="ECO:0000305" key="2"/>
<keyword id="KW-1185">Reference proteome</keyword>
<keyword id="KW-0687">Ribonucleoprotein</keyword>
<keyword id="KW-0689">Ribosomal protein</keyword>
<keyword id="KW-0694">RNA-binding</keyword>
<keyword id="KW-0699">rRNA-binding</keyword>